<comment type="function">
    <text evidence="1">Catalyzes the condensation of carbamoyl phosphate and aspartate to form carbamoyl aspartate and inorganic phosphate, the committed step in the de novo pyrimidine nucleotide biosynthesis pathway.</text>
</comment>
<comment type="catalytic activity">
    <reaction evidence="1">
        <text>carbamoyl phosphate + L-aspartate = N-carbamoyl-L-aspartate + phosphate + H(+)</text>
        <dbReference type="Rhea" id="RHEA:20013"/>
        <dbReference type="ChEBI" id="CHEBI:15378"/>
        <dbReference type="ChEBI" id="CHEBI:29991"/>
        <dbReference type="ChEBI" id="CHEBI:32814"/>
        <dbReference type="ChEBI" id="CHEBI:43474"/>
        <dbReference type="ChEBI" id="CHEBI:58228"/>
        <dbReference type="EC" id="2.1.3.2"/>
    </reaction>
</comment>
<comment type="pathway">
    <text evidence="1">Pyrimidine metabolism; UMP biosynthesis via de novo pathway; (S)-dihydroorotate from bicarbonate: step 2/3.</text>
</comment>
<comment type="subunit">
    <text evidence="1">Heterododecamer (2C3:3R2) of six catalytic PyrB chains organized as two trimers (C3), and six regulatory PyrI chains organized as three dimers (R2).</text>
</comment>
<comment type="similarity">
    <text evidence="1">Belongs to the aspartate/ornithine carbamoyltransferase superfamily. ATCase family.</text>
</comment>
<reference key="1">
    <citation type="journal article" date="2008" name="J. Bacteriol.">
        <title>Complete genome sequence of Neisseria gonorrhoeae NCCP11945.</title>
        <authorList>
            <person name="Chung G.T."/>
            <person name="Yoo J.S."/>
            <person name="Oh H.B."/>
            <person name="Lee Y.S."/>
            <person name="Cha S.H."/>
            <person name="Kim S.J."/>
            <person name="Yoo C.K."/>
        </authorList>
    </citation>
    <scope>NUCLEOTIDE SEQUENCE [LARGE SCALE GENOMIC DNA]</scope>
    <source>
        <strain>NCCP11945</strain>
    </source>
</reference>
<name>PYRB_NEIG2</name>
<gene>
    <name evidence="1" type="primary">pyrB</name>
    <name type="ordered locus">NGK_2390</name>
</gene>
<proteinExistence type="inferred from homology"/>
<feature type="chain" id="PRO_1000088781" description="Aspartate carbamoyltransferase catalytic subunit">
    <location>
        <begin position="1"/>
        <end position="306"/>
    </location>
</feature>
<feature type="binding site" evidence="1">
    <location>
        <position position="55"/>
    </location>
    <ligand>
        <name>carbamoyl phosphate</name>
        <dbReference type="ChEBI" id="CHEBI:58228"/>
    </ligand>
</feature>
<feature type="binding site" evidence="1">
    <location>
        <position position="56"/>
    </location>
    <ligand>
        <name>carbamoyl phosphate</name>
        <dbReference type="ChEBI" id="CHEBI:58228"/>
    </ligand>
</feature>
<feature type="binding site" evidence="1">
    <location>
        <position position="84"/>
    </location>
    <ligand>
        <name>L-aspartate</name>
        <dbReference type="ChEBI" id="CHEBI:29991"/>
    </ligand>
</feature>
<feature type="binding site" evidence="1">
    <location>
        <position position="105"/>
    </location>
    <ligand>
        <name>carbamoyl phosphate</name>
        <dbReference type="ChEBI" id="CHEBI:58228"/>
    </ligand>
</feature>
<feature type="binding site" evidence="1">
    <location>
        <position position="133"/>
    </location>
    <ligand>
        <name>carbamoyl phosphate</name>
        <dbReference type="ChEBI" id="CHEBI:58228"/>
    </ligand>
</feature>
<feature type="binding site" evidence="1">
    <location>
        <position position="136"/>
    </location>
    <ligand>
        <name>carbamoyl phosphate</name>
        <dbReference type="ChEBI" id="CHEBI:58228"/>
    </ligand>
</feature>
<feature type="binding site" evidence="1">
    <location>
        <position position="166"/>
    </location>
    <ligand>
        <name>L-aspartate</name>
        <dbReference type="ChEBI" id="CHEBI:29991"/>
    </ligand>
</feature>
<feature type="binding site" evidence="1">
    <location>
        <position position="227"/>
    </location>
    <ligand>
        <name>L-aspartate</name>
        <dbReference type="ChEBI" id="CHEBI:29991"/>
    </ligand>
</feature>
<feature type="binding site" evidence="1">
    <location>
        <position position="265"/>
    </location>
    <ligand>
        <name>carbamoyl phosphate</name>
        <dbReference type="ChEBI" id="CHEBI:58228"/>
    </ligand>
</feature>
<feature type="binding site" evidence="1">
    <location>
        <position position="266"/>
    </location>
    <ligand>
        <name>carbamoyl phosphate</name>
        <dbReference type="ChEBI" id="CHEBI:58228"/>
    </ligand>
</feature>
<dbReference type="EC" id="2.1.3.2" evidence="1"/>
<dbReference type="EMBL" id="CP001050">
    <property type="protein sequence ID" value="ACF30992.1"/>
    <property type="molecule type" value="Genomic_DNA"/>
</dbReference>
<dbReference type="RefSeq" id="WP_003690137.1">
    <property type="nucleotide sequence ID" value="NC_011035.1"/>
</dbReference>
<dbReference type="SMR" id="B4RPW7"/>
<dbReference type="GeneID" id="66754251"/>
<dbReference type="KEGG" id="ngk:NGK_2390"/>
<dbReference type="HOGENOM" id="CLU_043846_1_2_4"/>
<dbReference type="UniPathway" id="UPA00070">
    <property type="reaction ID" value="UER00116"/>
</dbReference>
<dbReference type="Proteomes" id="UP000002564">
    <property type="component" value="Chromosome"/>
</dbReference>
<dbReference type="GO" id="GO:0005829">
    <property type="term" value="C:cytosol"/>
    <property type="evidence" value="ECO:0007669"/>
    <property type="project" value="TreeGrafter"/>
</dbReference>
<dbReference type="GO" id="GO:0016597">
    <property type="term" value="F:amino acid binding"/>
    <property type="evidence" value="ECO:0007669"/>
    <property type="project" value="InterPro"/>
</dbReference>
<dbReference type="GO" id="GO:0004070">
    <property type="term" value="F:aspartate carbamoyltransferase activity"/>
    <property type="evidence" value="ECO:0007669"/>
    <property type="project" value="UniProtKB-UniRule"/>
</dbReference>
<dbReference type="GO" id="GO:0006207">
    <property type="term" value="P:'de novo' pyrimidine nucleobase biosynthetic process"/>
    <property type="evidence" value="ECO:0007669"/>
    <property type="project" value="InterPro"/>
</dbReference>
<dbReference type="GO" id="GO:0044205">
    <property type="term" value="P:'de novo' UMP biosynthetic process"/>
    <property type="evidence" value="ECO:0007669"/>
    <property type="project" value="UniProtKB-UniRule"/>
</dbReference>
<dbReference type="GO" id="GO:0006520">
    <property type="term" value="P:amino acid metabolic process"/>
    <property type="evidence" value="ECO:0007669"/>
    <property type="project" value="InterPro"/>
</dbReference>
<dbReference type="FunFam" id="3.40.50.1370:FF:000001">
    <property type="entry name" value="Aspartate carbamoyltransferase"/>
    <property type="match status" value="1"/>
</dbReference>
<dbReference type="FunFam" id="3.40.50.1370:FF:000002">
    <property type="entry name" value="Aspartate carbamoyltransferase 2"/>
    <property type="match status" value="1"/>
</dbReference>
<dbReference type="Gene3D" id="3.40.50.1370">
    <property type="entry name" value="Aspartate/ornithine carbamoyltransferase"/>
    <property type="match status" value="2"/>
</dbReference>
<dbReference type="HAMAP" id="MF_00001">
    <property type="entry name" value="Asp_carb_tr"/>
    <property type="match status" value="1"/>
</dbReference>
<dbReference type="InterPro" id="IPR006132">
    <property type="entry name" value="Asp/Orn_carbamoyltranf_P-bd"/>
</dbReference>
<dbReference type="InterPro" id="IPR006130">
    <property type="entry name" value="Asp/Orn_carbamoylTrfase"/>
</dbReference>
<dbReference type="InterPro" id="IPR036901">
    <property type="entry name" value="Asp/Orn_carbamoylTrfase_sf"/>
</dbReference>
<dbReference type="InterPro" id="IPR002082">
    <property type="entry name" value="Asp_carbamoyltransf"/>
</dbReference>
<dbReference type="InterPro" id="IPR006131">
    <property type="entry name" value="Asp_carbamoyltransf_Asp/Orn-bd"/>
</dbReference>
<dbReference type="NCBIfam" id="TIGR00670">
    <property type="entry name" value="asp_carb_tr"/>
    <property type="match status" value="1"/>
</dbReference>
<dbReference type="NCBIfam" id="NF002032">
    <property type="entry name" value="PRK00856.1"/>
    <property type="match status" value="1"/>
</dbReference>
<dbReference type="PANTHER" id="PTHR45753:SF6">
    <property type="entry name" value="ASPARTATE CARBAMOYLTRANSFERASE"/>
    <property type="match status" value="1"/>
</dbReference>
<dbReference type="PANTHER" id="PTHR45753">
    <property type="entry name" value="ORNITHINE CARBAMOYLTRANSFERASE, MITOCHONDRIAL"/>
    <property type="match status" value="1"/>
</dbReference>
<dbReference type="Pfam" id="PF00185">
    <property type="entry name" value="OTCace"/>
    <property type="match status" value="1"/>
</dbReference>
<dbReference type="Pfam" id="PF02729">
    <property type="entry name" value="OTCace_N"/>
    <property type="match status" value="1"/>
</dbReference>
<dbReference type="PRINTS" id="PR00100">
    <property type="entry name" value="AOTCASE"/>
</dbReference>
<dbReference type="PRINTS" id="PR00101">
    <property type="entry name" value="ATCASE"/>
</dbReference>
<dbReference type="SUPFAM" id="SSF53671">
    <property type="entry name" value="Aspartate/ornithine carbamoyltransferase"/>
    <property type="match status" value="1"/>
</dbReference>
<dbReference type="PROSITE" id="PS00097">
    <property type="entry name" value="CARBAMOYLTRANSFERASE"/>
    <property type="match status" value="1"/>
</dbReference>
<accession>B4RPW7</accession>
<sequence>MPNPLYRQHIISISDLSREQLECLLQTALKLKAHPRGDLLEGKLIGSCFFEPSTRTRLSFETAVQRLGGKVIGFSDGANTSAKKGETLADTARIISGYTDAIVQRHPKDGAARVAAEFSRVPVINAGDGTNQHPSQTLLDLVTIYETQGRLDKLKIAMAGDLKYGRTVHSLCQALKRWGCEFAFVSPPSLAMPDYITEELEEADCRYRALGSLEEAAEWADILYMTRVQRERFDEQEFAKIQGKFNLEASMLARAKPNLRVLHPLPRTDEIHPDVDAAPHAYYFEQATNGVYARMAILSLVLNEEV</sequence>
<organism>
    <name type="scientific">Neisseria gonorrhoeae (strain NCCP11945)</name>
    <dbReference type="NCBI Taxonomy" id="521006"/>
    <lineage>
        <taxon>Bacteria</taxon>
        <taxon>Pseudomonadati</taxon>
        <taxon>Pseudomonadota</taxon>
        <taxon>Betaproteobacteria</taxon>
        <taxon>Neisseriales</taxon>
        <taxon>Neisseriaceae</taxon>
        <taxon>Neisseria</taxon>
    </lineage>
</organism>
<protein>
    <recommendedName>
        <fullName evidence="1">Aspartate carbamoyltransferase catalytic subunit</fullName>
        <ecNumber evidence="1">2.1.3.2</ecNumber>
    </recommendedName>
    <alternativeName>
        <fullName evidence="1">Aspartate transcarbamylase</fullName>
        <shortName evidence="1">ATCase</shortName>
    </alternativeName>
</protein>
<evidence type="ECO:0000255" key="1">
    <source>
        <dbReference type="HAMAP-Rule" id="MF_00001"/>
    </source>
</evidence>
<keyword id="KW-0665">Pyrimidine biosynthesis</keyword>
<keyword id="KW-0808">Transferase</keyword>